<keyword id="KW-0028">Amino-acid biosynthesis</keyword>
<keyword id="KW-0057">Aromatic amino acid biosynthesis</keyword>
<keyword id="KW-0521">NADP</keyword>
<keyword id="KW-0560">Oxidoreductase</keyword>
<gene>
    <name evidence="1" type="primary">aroE</name>
    <name type="ordered locus">SPN23F13420</name>
</gene>
<proteinExistence type="inferred from homology"/>
<comment type="function">
    <text evidence="1">Involved in the biosynthesis of the chorismate, which leads to the biosynthesis of aromatic amino acids. Catalyzes the reversible NADPH linked reduction of 3-dehydroshikimate (DHSA) to yield shikimate (SA).</text>
</comment>
<comment type="catalytic activity">
    <reaction evidence="1">
        <text>shikimate + NADP(+) = 3-dehydroshikimate + NADPH + H(+)</text>
        <dbReference type="Rhea" id="RHEA:17737"/>
        <dbReference type="ChEBI" id="CHEBI:15378"/>
        <dbReference type="ChEBI" id="CHEBI:16630"/>
        <dbReference type="ChEBI" id="CHEBI:36208"/>
        <dbReference type="ChEBI" id="CHEBI:57783"/>
        <dbReference type="ChEBI" id="CHEBI:58349"/>
        <dbReference type="EC" id="1.1.1.25"/>
    </reaction>
</comment>
<comment type="pathway">
    <text evidence="1">Metabolic intermediate biosynthesis; chorismate biosynthesis; chorismate from D-erythrose 4-phosphate and phosphoenolpyruvate: step 4/7.</text>
</comment>
<comment type="subunit">
    <text evidence="1">Homodimer.</text>
</comment>
<comment type="similarity">
    <text evidence="1">Belongs to the shikimate dehydrogenase family.</text>
</comment>
<evidence type="ECO:0000255" key="1">
    <source>
        <dbReference type="HAMAP-Rule" id="MF_00222"/>
    </source>
</evidence>
<name>AROE_STRPJ</name>
<protein>
    <recommendedName>
        <fullName evidence="1">Shikimate dehydrogenase (NADP(+))</fullName>
        <shortName evidence="1">SDH</shortName>
        <ecNumber evidence="1">1.1.1.25</ecNumber>
    </recommendedName>
</protein>
<dbReference type="EC" id="1.1.1.25" evidence="1"/>
<dbReference type="EMBL" id="FM211187">
    <property type="protein sequence ID" value="CAR69142.1"/>
    <property type="molecule type" value="Genomic_DNA"/>
</dbReference>
<dbReference type="RefSeq" id="WP_000762476.1">
    <property type="nucleotide sequence ID" value="NC_011900.1"/>
</dbReference>
<dbReference type="SMR" id="B8ZKM5"/>
<dbReference type="KEGG" id="sne:SPN23F13420"/>
<dbReference type="HOGENOM" id="CLU_044063_4_4_9"/>
<dbReference type="UniPathway" id="UPA00053">
    <property type="reaction ID" value="UER00087"/>
</dbReference>
<dbReference type="GO" id="GO:0050661">
    <property type="term" value="F:NADP binding"/>
    <property type="evidence" value="ECO:0007669"/>
    <property type="project" value="InterPro"/>
</dbReference>
<dbReference type="GO" id="GO:0004764">
    <property type="term" value="F:shikimate 3-dehydrogenase (NADP+) activity"/>
    <property type="evidence" value="ECO:0007669"/>
    <property type="project" value="UniProtKB-UniRule"/>
</dbReference>
<dbReference type="GO" id="GO:0008652">
    <property type="term" value="P:amino acid biosynthetic process"/>
    <property type="evidence" value="ECO:0007669"/>
    <property type="project" value="UniProtKB-KW"/>
</dbReference>
<dbReference type="GO" id="GO:0009073">
    <property type="term" value="P:aromatic amino acid family biosynthetic process"/>
    <property type="evidence" value="ECO:0007669"/>
    <property type="project" value="UniProtKB-KW"/>
</dbReference>
<dbReference type="GO" id="GO:0009423">
    <property type="term" value="P:chorismate biosynthetic process"/>
    <property type="evidence" value="ECO:0007669"/>
    <property type="project" value="UniProtKB-UniRule"/>
</dbReference>
<dbReference type="GO" id="GO:0019632">
    <property type="term" value="P:shikimate metabolic process"/>
    <property type="evidence" value="ECO:0007669"/>
    <property type="project" value="InterPro"/>
</dbReference>
<dbReference type="CDD" id="cd01065">
    <property type="entry name" value="NAD_bind_Shikimate_DH"/>
    <property type="match status" value="1"/>
</dbReference>
<dbReference type="FunFam" id="3.40.50.10860:FF:000004">
    <property type="entry name" value="Quinate/shikimate dehydrogenase"/>
    <property type="match status" value="1"/>
</dbReference>
<dbReference type="Gene3D" id="3.40.50.10860">
    <property type="entry name" value="Leucine Dehydrogenase, chain A, domain 1"/>
    <property type="match status" value="1"/>
</dbReference>
<dbReference type="Gene3D" id="3.40.50.720">
    <property type="entry name" value="NAD(P)-binding Rossmann-like Domain"/>
    <property type="match status" value="1"/>
</dbReference>
<dbReference type="HAMAP" id="MF_00222">
    <property type="entry name" value="Shikimate_DH_AroE"/>
    <property type="match status" value="1"/>
</dbReference>
<dbReference type="InterPro" id="IPR046346">
    <property type="entry name" value="Aminoacid_DH-like_N_sf"/>
</dbReference>
<dbReference type="InterPro" id="IPR036291">
    <property type="entry name" value="NAD(P)-bd_dom_sf"/>
</dbReference>
<dbReference type="InterPro" id="IPR041121">
    <property type="entry name" value="SDH_C"/>
</dbReference>
<dbReference type="InterPro" id="IPR011342">
    <property type="entry name" value="Shikimate_DH"/>
</dbReference>
<dbReference type="InterPro" id="IPR013708">
    <property type="entry name" value="Shikimate_DH-bd_N"/>
</dbReference>
<dbReference type="InterPro" id="IPR022893">
    <property type="entry name" value="Shikimate_DH_fam"/>
</dbReference>
<dbReference type="NCBIfam" id="TIGR00507">
    <property type="entry name" value="aroE"/>
    <property type="match status" value="1"/>
</dbReference>
<dbReference type="NCBIfam" id="NF001315">
    <property type="entry name" value="PRK00258.2-4"/>
    <property type="match status" value="1"/>
</dbReference>
<dbReference type="PANTHER" id="PTHR21089:SF1">
    <property type="entry name" value="BIFUNCTIONAL 3-DEHYDROQUINATE DEHYDRATASE_SHIKIMATE DEHYDROGENASE, CHLOROPLASTIC"/>
    <property type="match status" value="1"/>
</dbReference>
<dbReference type="PANTHER" id="PTHR21089">
    <property type="entry name" value="SHIKIMATE DEHYDROGENASE"/>
    <property type="match status" value="1"/>
</dbReference>
<dbReference type="Pfam" id="PF18317">
    <property type="entry name" value="SDH_C"/>
    <property type="match status" value="1"/>
</dbReference>
<dbReference type="Pfam" id="PF08501">
    <property type="entry name" value="Shikimate_dh_N"/>
    <property type="match status" value="1"/>
</dbReference>
<dbReference type="SUPFAM" id="SSF53223">
    <property type="entry name" value="Aminoacid dehydrogenase-like, N-terminal domain"/>
    <property type="match status" value="1"/>
</dbReference>
<dbReference type="SUPFAM" id="SSF51735">
    <property type="entry name" value="NAD(P)-binding Rossmann-fold domains"/>
    <property type="match status" value="1"/>
</dbReference>
<accession>B8ZKM5</accession>
<sequence length="284" mass="31283">MKLDGYTRLAAVVANPIKHSISPFIHNRAFEATATNGAYVAWEIEASDLAETVANIRRYQMFGINLSMPYKEQVIPYLDKLSDEARLIGAVNTVVNENGNLIGYNTDGKGFFKCLPSFTISGKKMTLLGAGGAAKSILAQAILDGVSQISVFVRSVSMEKTRPYLDKLQEQTGFKVDLYALENVSELQARIVESDLLVNATSVGMDGQSSPVPESINLPETILVADIIYQPFETPFLKWARSQGKPAVNGLGMLLYQAAEAFQLWTGKEMPTEEIWQSLTEKYQ</sequence>
<feature type="chain" id="PRO_1000124896" description="Shikimate dehydrogenase (NADP(+))">
    <location>
        <begin position="1"/>
        <end position="284"/>
    </location>
</feature>
<feature type="active site" description="Proton acceptor" evidence="1">
    <location>
        <position position="71"/>
    </location>
</feature>
<feature type="binding site" evidence="1">
    <location>
        <begin position="20"/>
        <end position="22"/>
    </location>
    <ligand>
        <name>shikimate</name>
        <dbReference type="ChEBI" id="CHEBI:36208"/>
    </ligand>
</feature>
<feature type="binding site" evidence="1">
    <location>
        <position position="67"/>
    </location>
    <ligand>
        <name>shikimate</name>
        <dbReference type="ChEBI" id="CHEBI:36208"/>
    </ligand>
</feature>
<feature type="binding site" evidence="1">
    <location>
        <position position="83"/>
    </location>
    <ligand>
        <name>NADP(+)</name>
        <dbReference type="ChEBI" id="CHEBI:58349"/>
    </ligand>
</feature>
<feature type="binding site" evidence="1">
    <location>
        <position position="92"/>
    </location>
    <ligand>
        <name>shikimate</name>
        <dbReference type="ChEBI" id="CHEBI:36208"/>
    </ligand>
</feature>
<feature type="binding site" evidence="1">
    <location>
        <position position="107"/>
    </location>
    <ligand>
        <name>shikimate</name>
        <dbReference type="ChEBI" id="CHEBI:36208"/>
    </ligand>
</feature>
<feature type="binding site" evidence="1">
    <location>
        <begin position="129"/>
        <end position="133"/>
    </location>
    <ligand>
        <name>NADP(+)</name>
        <dbReference type="ChEBI" id="CHEBI:58349"/>
    </ligand>
</feature>
<feature type="binding site" evidence="1">
    <location>
        <position position="227"/>
    </location>
    <ligand>
        <name>NADP(+)</name>
        <dbReference type="ChEBI" id="CHEBI:58349"/>
    </ligand>
</feature>
<feature type="binding site" evidence="1">
    <location>
        <position position="229"/>
    </location>
    <ligand>
        <name>shikimate</name>
        <dbReference type="ChEBI" id="CHEBI:36208"/>
    </ligand>
</feature>
<feature type="binding site" evidence="1">
    <location>
        <position position="250"/>
    </location>
    <ligand>
        <name>NADP(+)</name>
        <dbReference type="ChEBI" id="CHEBI:58349"/>
    </ligand>
</feature>
<organism>
    <name type="scientific">Streptococcus pneumoniae (strain ATCC 700669 / Spain 23F-1)</name>
    <dbReference type="NCBI Taxonomy" id="561276"/>
    <lineage>
        <taxon>Bacteria</taxon>
        <taxon>Bacillati</taxon>
        <taxon>Bacillota</taxon>
        <taxon>Bacilli</taxon>
        <taxon>Lactobacillales</taxon>
        <taxon>Streptococcaceae</taxon>
        <taxon>Streptococcus</taxon>
    </lineage>
</organism>
<reference key="1">
    <citation type="journal article" date="2009" name="J. Bacteriol.">
        <title>Role of conjugative elements in the evolution of the multidrug-resistant pandemic clone Streptococcus pneumoniae Spain23F ST81.</title>
        <authorList>
            <person name="Croucher N.J."/>
            <person name="Walker D."/>
            <person name="Romero P."/>
            <person name="Lennard N."/>
            <person name="Paterson G.K."/>
            <person name="Bason N.C."/>
            <person name="Mitchell A.M."/>
            <person name="Quail M.A."/>
            <person name="Andrew P.W."/>
            <person name="Parkhill J."/>
            <person name="Bentley S.D."/>
            <person name="Mitchell T.J."/>
        </authorList>
    </citation>
    <scope>NUCLEOTIDE SEQUENCE [LARGE SCALE GENOMIC DNA]</scope>
    <source>
        <strain>ATCC 700669 / Spain 23F-1</strain>
    </source>
</reference>